<gene>
    <name type="primary">RPS23A</name>
    <name type="ordered locus">orf19.6253</name>
    <name type="ORF">CAALFM_C106580WA</name>
</gene>
<comment type="function">
    <text evidence="4">Component of the ribosome, a large ribonucleoprotein complex responsible for the synthesis of proteins in the cell. The small ribosomal subunit (SSU) binds messenger RNAs (mRNAs) and translates the encoded message by selecting cognate aminoacyl-transfer RNA (tRNA) molecules. The large subunit (LSU) contains the ribosomal catalytic site termed the peptidyl transferase center (PTC), which catalyzes the formation of peptide bonds, thereby polymerizing the amino acids delivered by tRNAs into a polypeptide chain. The nascent polypeptides leave the ribosome through a tunnel in the LSU and interact with protein factors that function in enzymatic processing, targeting, and the membrane insertion of nascent chains at the exit of the ribosomal tunnel.</text>
</comment>
<comment type="subunit">
    <text evidence="1">Component of the small ribosomal subunit (PubMed:35613268). Mature ribosomes consist of a small (40S) and a large (60S) subunit (PubMed:35613268). The 40S subunit contains about 32 different proteins and 1 molecule of RNA (18S) (PubMed:35613268). The 60S subunit contains 45 different proteins and 3 molecules of RNA (25S, 5.8S and 5S) (PubMed:35613268).</text>
</comment>
<comment type="subcellular location">
    <subcellularLocation>
        <location evidence="4">Cytoplasm</location>
    </subcellularLocation>
</comment>
<comment type="similarity">
    <text evidence="3">Belongs to the universal ribosomal protein uS12 family.</text>
</comment>
<name>RS23B_CANAL</name>
<proteinExistence type="evidence at protein level"/>
<evidence type="ECO:0000269" key="1">
    <source>
    </source>
</evidence>
<evidence type="ECO:0000303" key="2">
    <source>
    </source>
</evidence>
<evidence type="ECO:0000305" key="3"/>
<evidence type="ECO:0000305" key="4">
    <source>
    </source>
</evidence>
<evidence type="ECO:0007744" key="5">
    <source>
        <dbReference type="PDB" id="7PZY"/>
    </source>
</evidence>
<evidence type="ECO:0007744" key="6">
    <source>
        <dbReference type="PDB" id="7Q0F"/>
    </source>
</evidence>
<evidence type="ECO:0007744" key="7">
    <source>
        <dbReference type="PDB" id="7Q0P"/>
    </source>
</evidence>
<feature type="chain" id="PRO_0000456560" description="Small ribosomal subunit protein uS12">
    <location>
        <begin position="1"/>
        <end position="145"/>
    </location>
</feature>
<reference key="1">
    <citation type="journal article" date="2004" name="Proc. Natl. Acad. Sci. U.S.A.">
        <title>The diploid genome sequence of Candida albicans.</title>
        <authorList>
            <person name="Jones T."/>
            <person name="Federspiel N.A."/>
            <person name="Chibana H."/>
            <person name="Dungan J."/>
            <person name="Kalman S."/>
            <person name="Magee B.B."/>
            <person name="Newport G."/>
            <person name="Thorstenson Y.R."/>
            <person name="Agabian N."/>
            <person name="Magee P.T."/>
            <person name="Davis R.W."/>
            <person name="Scherer S."/>
        </authorList>
    </citation>
    <scope>NUCLEOTIDE SEQUENCE [LARGE SCALE GENOMIC DNA]</scope>
    <source>
        <strain>SC5314 / ATCC MYA-2876</strain>
    </source>
</reference>
<reference key="2">
    <citation type="journal article" date="2007" name="Genome Biol.">
        <title>Assembly of the Candida albicans genome into sixteen supercontigs aligned on the eight chromosomes.</title>
        <authorList>
            <person name="van het Hoog M."/>
            <person name="Rast T.J."/>
            <person name="Martchenko M."/>
            <person name="Grindle S."/>
            <person name="Dignard D."/>
            <person name="Hogues H."/>
            <person name="Cuomo C."/>
            <person name="Berriman M."/>
            <person name="Scherer S."/>
            <person name="Magee B.B."/>
            <person name="Whiteway M."/>
            <person name="Chibana H."/>
            <person name="Nantel A."/>
            <person name="Magee P.T."/>
        </authorList>
    </citation>
    <scope>GENOME REANNOTATION</scope>
    <source>
        <strain>SC5314 / ATCC MYA-2876</strain>
    </source>
</reference>
<reference key="3">
    <citation type="journal article" date="2013" name="Genome Biol.">
        <title>Assembly of a phased diploid Candida albicans genome facilitates allele-specific measurements and provides a simple model for repeat and indel structure.</title>
        <authorList>
            <person name="Muzzey D."/>
            <person name="Schwartz K."/>
            <person name="Weissman J.S."/>
            <person name="Sherlock G."/>
        </authorList>
    </citation>
    <scope>NUCLEOTIDE SEQUENCE [LARGE SCALE GENOMIC DNA]</scope>
    <scope>GENOME REANNOTATION</scope>
    <source>
        <strain>SC5314 / ATCC MYA-2876</strain>
    </source>
</reference>
<reference evidence="5 6 7" key="4">
    <citation type="journal article" date="2022" name="Sci. Adv.">
        <title>E-site drug specificity of the human pathogen Candida albicans ribosome.</title>
        <authorList>
            <person name="Zgadzay Y."/>
            <person name="Kolosova O."/>
            <person name="Stetsenko A."/>
            <person name="Wu C."/>
            <person name="Bruchlen D."/>
            <person name="Usachev K."/>
            <person name="Validov S."/>
            <person name="Jenner L."/>
            <person name="Rogachev A."/>
            <person name="Yusupova G."/>
            <person name="Sachs M.S."/>
            <person name="Guskov A."/>
            <person name="Yusupov M."/>
        </authorList>
    </citation>
    <scope>STRUCTURE BY ELECTRON MICROSCOPY (2.32 ANGSTROMS) OF THE 80S RIBOSOME</scope>
    <scope>SUBUNIT</scope>
</reference>
<dbReference type="EMBL" id="CP017623">
    <property type="protein sequence ID" value="AOW26314.1"/>
    <property type="molecule type" value="Genomic_DNA"/>
</dbReference>
<dbReference type="RefSeq" id="XP_718841.2">
    <property type="nucleotide sequence ID" value="XM_713748.2"/>
</dbReference>
<dbReference type="PDB" id="7PZY">
    <property type="method" value="EM"/>
    <property type="resolution" value="2.32 A"/>
    <property type="chains" value="Y=1-145"/>
</dbReference>
<dbReference type="PDB" id="7Q08">
    <property type="method" value="EM"/>
    <property type="resolution" value="2.56 A"/>
    <property type="chains" value="Y=1-145"/>
</dbReference>
<dbReference type="PDB" id="7Q0F">
    <property type="method" value="EM"/>
    <property type="resolution" value="2.64 A"/>
    <property type="chains" value="Y=1-145"/>
</dbReference>
<dbReference type="PDB" id="7Q0P">
    <property type="method" value="EM"/>
    <property type="resolution" value="2.77 A"/>
    <property type="chains" value="Y=1-145"/>
</dbReference>
<dbReference type="PDB" id="7Q0R">
    <property type="method" value="EM"/>
    <property type="resolution" value="2.67 A"/>
    <property type="chains" value="Y=1-145"/>
</dbReference>
<dbReference type="PDB" id="8C3A">
    <property type="method" value="X-ray"/>
    <property type="resolution" value="3.00 A"/>
    <property type="chains" value="DK/Z=1-145"/>
</dbReference>
<dbReference type="PDB" id="8OGJ">
    <property type="method" value="EM"/>
    <property type="resolution" value="3.10 A"/>
    <property type="chains" value="Y=1-145"/>
</dbReference>
<dbReference type="PDB" id="8OH6">
    <property type="method" value="X-ray"/>
    <property type="resolution" value="3.35 A"/>
    <property type="chains" value="DK/Z=1-145"/>
</dbReference>
<dbReference type="PDB" id="8OI5">
    <property type="method" value="X-ray"/>
    <property type="resolution" value="2.90 A"/>
    <property type="chains" value="DK/Z=1-145"/>
</dbReference>
<dbReference type="PDB" id="8OJ3">
    <property type="method" value="X-ray"/>
    <property type="resolution" value="3.50 A"/>
    <property type="chains" value="DK/Z=1-145"/>
</dbReference>
<dbReference type="PDBsum" id="7PZY"/>
<dbReference type="PDBsum" id="7Q08"/>
<dbReference type="PDBsum" id="7Q0F"/>
<dbReference type="PDBsum" id="7Q0P"/>
<dbReference type="PDBsum" id="7Q0R"/>
<dbReference type="PDBsum" id="8C3A"/>
<dbReference type="PDBsum" id="8OGJ"/>
<dbReference type="PDBsum" id="8OH6"/>
<dbReference type="PDBsum" id="8OI5"/>
<dbReference type="PDBsum" id="8OJ3"/>
<dbReference type="EMDB" id="EMD-13737"/>
<dbReference type="EMDB" id="EMD-13741"/>
<dbReference type="EMDB" id="EMD-13744"/>
<dbReference type="EMDB" id="EMD-13749"/>
<dbReference type="EMDB" id="EMD-13750"/>
<dbReference type="SMR" id="A0A1D8PDU3"/>
<dbReference type="FunCoup" id="A0A1D8PDU3">
    <property type="interactions" value="866"/>
</dbReference>
<dbReference type="STRING" id="237561.A0A1D8PDU3"/>
<dbReference type="EnsemblFungi" id="C1_06580W_A-T">
    <property type="protein sequence ID" value="C1_06580W_A-T-p1"/>
    <property type="gene ID" value="C1_06580W_A"/>
</dbReference>
<dbReference type="GeneID" id="3639515"/>
<dbReference type="KEGG" id="cal:CAALFM_C106580WA"/>
<dbReference type="CGD" id="CAL0000197722">
    <property type="gene designation" value="RPS23A"/>
</dbReference>
<dbReference type="VEuPathDB" id="FungiDB:C1_06580W_A"/>
<dbReference type="InParanoid" id="A0A1D8PDU3"/>
<dbReference type="OMA" id="KFRWSQR"/>
<dbReference type="OrthoDB" id="1713912at2759"/>
<dbReference type="Proteomes" id="UP000000559">
    <property type="component" value="Chromosome 1"/>
</dbReference>
<dbReference type="GO" id="GO:0022627">
    <property type="term" value="C:cytosolic small ribosomal subunit"/>
    <property type="evidence" value="ECO:0000318"/>
    <property type="project" value="GO_Central"/>
</dbReference>
<dbReference type="GO" id="GO:0062040">
    <property type="term" value="C:fungal biofilm matrix"/>
    <property type="evidence" value="ECO:0000314"/>
    <property type="project" value="CGD"/>
</dbReference>
<dbReference type="GO" id="GO:0005840">
    <property type="term" value="C:ribosome"/>
    <property type="evidence" value="ECO:0000318"/>
    <property type="project" value="GO_Central"/>
</dbReference>
<dbReference type="GO" id="GO:0003735">
    <property type="term" value="F:structural constituent of ribosome"/>
    <property type="evidence" value="ECO:0000318"/>
    <property type="project" value="GO_Central"/>
</dbReference>
<dbReference type="GO" id="GO:0006412">
    <property type="term" value="P:translation"/>
    <property type="evidence" value="ECO:0000318"/>
    <property type="project" value="GO_Central"/>
</dbReference>
<dbReference type="CDD" id="cd03367">
    <property type="entry name" value="Ribosomal_S23"/>
    <property type="match status" value="1"/>
</dbReference>
<dbReference type="FunFam" id="2.40.50.140:FF:000007">
    <property type="entry name" value="40S ribosomal protein S23"/>
    <property type="match status" value="1"/>
</dbReference>
<dbReference type="Gene3D" id="2.40.50.140">
    <property type="entry name" value="Nucleic acid-binding proteins"/>
    <property type="match status" value="1"/>
</dbReference>
<dbReference type="InterPro" id="IPR012340">
    <property type="entry name" value="NA-bd_OB-fold"/>
</dbReference>
<dbReference type="InterPro" id="IPR006032">
    <property type="entry name" value="Ribosomal_uS12"/>
</dbReference>
<dbReference type="InterPro" id="IPR005680">
    <property type="entry name" value="Ribosomal_uS12_euk/arc"/>
</dbReference>
<dbReference type="NCBIfam" id="NF003254">
    <property type="entry name" value="PRK04211.1"/>
    <property type="match status" value="1"/>
</dbReference>
<dbReference type="NCBIfam" id="TIGR00982">
    <property type="entry name" value="uS12_E_A"/>
    <property type="match status" value="1"/>
</dbReference>
<dbReference type="PANTHER" id="PTHR11652">
    <property type="entry name" value="30S RIBOSOMAL PROTEIN S12 FAMILY MEMBER"/>
    <property type="match status" value="1"/>
</dbReference>
<dbReference type="Pfam" id="PF00164">
    <property type="entry name" value="Ribosom_S12_S23"/>
    <property type="match status" value="1"/>
</dbReference>
<dbReference type="PIRSF" id="PIRSF002133">
    <property type="entry name" value="Ribosomal_S12/S23"/>
    <property type="match status" value="1"/>
</dbReference>
<dbReference type="SUPFAM" id="SSF50249">
    <property type="entry name" value="Nucleic acid-binding proteins"/>
    <property type="match status" value="1"/>
</dbReference>
<dbReference type="PROSITE" id="PS00055">
    <property type="entry name" value="RIBOSOMAL_S12"/>
    <property type="match status" value="1"/>
</dbReference>
<protein>
    <recommendedName>
        <fullName evidence="2">Small ribosomal subunit protein uS12</fullName>
    </recommendedName>
    <alternativeName>
        <fullName evidence="2">40S ribosomal protein S23B</fullName>
    </alternativeName>
</protein>
<accession>A0A1D8PDU3</accession>
<organism>
    <name type="scientific">Candida albicans (strain SC5314 / ATCC MYA-2876)</name>
    <name type="common">Yeast</name>
    <dbReference type="NCBI Taxonomy" id="237561"/>
    <lineage>
        <taxon>Eukaryota</taxon>
        <taxon>Fungi</taxon>
        <taxon>Dikarya</taxon>
        <taxon>Ascomycota</taxon>
        <taxon>Saccharomycotina</taxon>
        <taxon>Pichiomycetes</taxon>
        <taxon>Debaryomycetaceae</taxon>
        <taxon>Candida/Lodderomyces clade</taxon>
        <taxon>Candida</taxon>
    </lineage>
</organism>
<keyword id="KW-0002">3D-structure</keyword>
<keyword id="KW-0963">Cytoplasm</keyword>
<keyword id="KW-1185">Reference proteome</keyword>
<keyword id="KW-0687">Ribonucleoprotein</keyword>
<keyword id="KW-0689">Ribosomal protein</keyword>
<sequence>MGKGKPRGLNSARKLRVHRRNNRWADQAYKARLLGTAFKSSPFGGSSHAKGIVLEKIGIESKQPNSAIRKCVRVQLIKNGKKVTAFVPNDGCLNFVDENDEVLLAGFGRRGKAKGDIPGVRFKVVKVSGVSLLALWKEKKEKPRS</sequence>